<proteinExistence type="evidence at protein level"/>
<sequence length="423" mass="47706">MFEMRSANPIENFVVSKIHIRGLDFAASVENEITHMEIYESLNGLVSGMFMFKDSIGVVDTIRMTGFEAIDVEFASYVGEQANRVYQKSFRATGISRMPARTGGFETVLVRFTNNLLTLNDYVKRPYVFKKTSISNIIKAILDNLGDEKPEYEIETSLYQRDFVTKIGKPYDIIKSIVDHASTDVNNSCKFMFYEDRDSVKFASLGSIRDKEYEYIIRKGADTGDGKWTSGNTNTITALRVVVKEQSNMHEISSGLFGSRTYSHSLIRKKLTTKDVRRNDYIAQVGILNDRAHMYTNELEFASEVPETEQPLNSIQLLPNDGFYEHDNKHPLGSIHGVSLMEETYLKAKQIIVEIPGNTNITVGDVVFLDYHAVTGENHSSLDASGRWIVHELKHRVEPNSFITTLELSSDSSVNIAIAGSKK</sequence>
<accession>Q6WHH0</accession>
<reference key="1">
    <citation type="journal article" date="2003" name="J. Bacteriol.">
        <title>Complete genome sequence of the broad-host-range vibriophage KVP40: comparative genomics of a T4-related bacteriophage.</title>
        <authorList>
            <person name="Miller E.S."/>
            <person name="Heidelberg J.F."/>
            <person name="Eisen J.A."/>
            <person name="Nelson W.C."/>
            <person name="Durkin A.S."/>
            <person name="Ciecko A."/>
            <person name="Feldblyum T.V."/>
            <person name="White O."/>
            <person name="Paulsen I.T."/>
            <person name="Nierman W.C."/>
            <person name="Lee J."/>
            <person name="Szczypinski B."/>
            <person name="Fraser C.M."/>
        </authorList>
    </citation>
    <scope>NUCLEOTIDE SEQUENCE [GENOMIC DNA]</scope>
    <source>
        <strain evidence="5">Isolate Vibrio parahaemolyticus/Japan/Matsuzaki /1991</strain>
    </source>
</reference>
<reference key="2">
    <citation type="journal article" date="2008" name="J. Bacteriol.">
        <title>ORF334 in Vibrio phage KVP40 plays the role of gp27 in T4 phage to form a heterohexameric complex.</title>
        <authorList>
            <person name="Nemoto M."/>
            <person name="Mio K."/>
            <person name="Kanamaru S."/>
            <person name="Arisaka F."/>
        </authorList>
    </citation>
    <scope>PROTEIN SEQUENCE OF 1-7</scope>
    <scope>INTERACTION WITH GP5</scope>
    <scope>SUBUNIT</scope>
</reference>
<name>BP27_BPKVM</name>
<dbReference type="EMBL" id="AY283928">
    <property type="protein sequence ID" value="AAQ64403.1"/>
    <property type="molecule type" value="Genomic_DNA"/>
</dbReference>
<dbReference type="RefSeq" id="NP_899580.1">
    <property type="nucleotide sequence ID" value="NC_005083.2"/>
</dbReference>
<dbReference type="GeneID" id="2545808"/>
<dbReference type="KEGG" id="vg:2545808"/>
<dbReference type="OrthoDB" id="3486at10239"/>
<dbReference type="Proteomes" id="UP000001785">
    <property type="component" value="Genome"/>
</dbReference>
<dbReference type="GO" id="GO:0098025">
    <property type="term" value="C:virus tail, baseplate"/>
    <property type="evidence" value="ECO:0007669"/>
    <property type="project" value="UniProtKB-KW"/>
</dbReference>
<keyword id="KW-0903">Direct protein sequencing</keyword>
<keyword id="KW-0426">Late protein</keyword>
<keyword id="KW-1185">Reference proteome</keyword>
<keyword id="KW-1226">Viral baseplate protein</keyword>
<keyword id="KW-1227">Viral tail protein</keyword>
<keyword id="KW-0946">Virion</keyword>
<organismHost>
    <name type="scientific">Vibrio parahaemolyticus</name>
    <dbReference type="NCBI Taxonomy" id="670"/>
</organismHost>
<protein>
    <recommendedName>
        <fullName evidence="4">Probable baseplate hub protein gp334</fullName>
    </recommendedName>
</protein>
<evidence type="ECO:0000250" key="1">
    <source>
        <dbReference type="UniProtKB" id="P17172"/>
    </source>
</evidence>
<evidence type="ECO:0000269" key="2">
    <source>
    </source>
</evidence>
<evidence type="ECO:0000305" key="3"/>
<evidence type="ECO:0000312" key="4">
    <source>
        <dbReference type="EMBL" id="AAQ64403.1"/>
    </source>
</evidence>
<evidence type="ECO:0000312" key="5">
    <source>
        <dbReference type="Proteomes" id="UP000001785"/>
    </source>
</evidence>
<gene>
    <name evidence="4" type="ORF">KVP40.0334</name>
</gene>
<feature type="chain" id="PRO_0000432928" description="Probable baseplate hub protein gp334">
    <location>
        <begin position="1"/>
        <end position="423"/>
    </location>
</feature>
<comment type="function">
    <text evidence="1">Baseplate protein that is part of the baseplate hub. Involved in the tail assembly.</text>
</comment>
<comment type="subunit">
    <text evidence="2">Homotrimer. Interacts with gp5 trimer.</text>
</comment>
<comment type="subcellular location">
    <subcellularLocation>
        <location evidence="1">Virion</location>
    </subcellularLocation>
    <text evidence="1">Present in 3 copies in the baseplate.</text>
</comment>
<comment type="induction">
    <text evidence="3">Expressed in the late phase of the viral replicative cycle.</text>
</comment>
<organism evidence="5">
    <name type="scientific">Vibrio phage KVP40 (isolate Vibrio parahaemolyticus/Japan/Matsuzaki/1991)</name>
    <name type="common">KVP40</name>
    <name type="synonym">Bacteriophage KVP40</name>
    <dbReference type="NCBI Taxonomy" id="75320"/>
    <lineage>
        <taxon>Viruses</taxon>
        <taxon>Duplodnaviria</taxon>
        <taxon>Heunggongvirae</taxon>
        <taxon>Uroviricota</taxon>
        <taxon>Caudoviricetes</taxon>
        <taxon>Straboviridae</taxon>
        <taxon>Schizotequatrovirus</taxon>
        <taxon>Schizotequatrovirus KVP40</taxon>
    </lineage>
</organism>